<proteinExistence type="inferred from homology"/>
<accession>Q8R5S4</accession>
<evidence type="ECO:0000250" key="1"/>
<evidence type="ECO:0000255" key="2"/>
<evidence type="ECO:0000255" key="3">
    <source>
        <dbReference type="PROSITE-ProRule" id="PRU00289"/>
    </source>
</evidence>
<evidence type="ECO:0000305" key="4"/>
<name>FTSK_CALS4</name>
<gene>
    <name type="primary">ftsK</name>
    <name type="ordered locus">TTE1378</name>
</gene>
<feature type="chain" id="PRO_0000098312" description="DNA translocase FtsK">
    <location>
        <begin position="1"/>
        <end position="709"/>
    </location>
</feature>
<feature type="transmembrane region" description="Helical" evidence="2">
    <location>
        <begin position="13"/>
        <end position="33"/>
    </location>
</feature>
<feature type="transmembrane region" description="Helical" evidence="2">
    <location>
        <begin position="48"/>
        <end position="68"/>
    </location>
</feature>
<feature type="transmembrane region" description="Helical" evidence="2">
    <location>
        <begin position="82"/>
        <end position="102"/>
    </location>
</feature>
<feature type="transmembrane region" description="Helical" evidence="2">
    <location>
        <begin position="114"/>
        <end position="134"/>
    </location>
</feature>
<feature type="transmembrane region" description="Helical" evidence="2">
    <location>
        <begin position="137"/>
        <end position="157"/>
    </location>
</feature>
<feature type="topological domain" description="Cytoplasmic" evidence="2">
    <location>
        <begin position="158"/>
        <end position="709"/>
    </location>
</feature>
<feature type="domain" description="FtsK" evidence="3">
    <location>
        <begin position="376"/>
        <end position="563"/>
    </location>
</feature>
<feature type="binding site" evidence="3">
    <location>
        <begin position="396"/>
        <end position="401"/>
    </location>
    <ligand>
        <name>ATP</name>
        <dbReference type="ChEBI" id="CHEBI:30616"/>
    </ligand>
</feature>
<comment type="function">
    <text evidence="1">Essential cell division protein that coordinates cell division and chromosome segregation. The N-terminus is involved in assembly of the cell-division machinery. The C-terminus functions as a DNA motor that moves dsDNA in an ATP-dependent manner towards the dif recombination site, which is located within the replication terminus region. Required for activation of the Xer recombinase, allowing activation of chromosome unlinking by recombination (By similarity).</text>
</comment>
<comment type="subunit">
    <text evidence="1">Homohexamer. Forms a ring that surrounds DNA (By similarity).</text>
</comment>
<comment type="subcellular location">
    <subcellularLocation>
        <location evidence="1">Cell membrane</location>
        <topology evidence="1">Multi-pass membrane protein</topology>
    </subcellularLocation>
    <text evidence="1">Located at the septum.</text>
</comment>
<comment type="domain">
    <text evidence="1">Consists of an N-terminal domain, which is sufficient for the localization to the septal ring and is required for cell division, followed by a linker domain, and a C-terminal domain, which forms the translocation motor involved in chromosome segregation. The C-terminal domain can be further subdivided into alpha, beta and gamma subdomains. The alpha and beta subdomains form the DNA pump, and the gamma subdomain is a regulatory subdomain (By similarity).</text>
</comment>
<comment type="similarity">
    <text evidence="4">Belongs to the FtsK/SpoIIIE/SftA family.</text>
</comment>
<sequence length="709" mass="78916">MIDKKQKPVKEEIVGIIFLAFTLISFLSLYTDSTGIIGKHIGIFLKGFFGTGSYVISALLLVFALMFLFTNKNFIKLHRSMALLGLFLMFISLNQLYYFPVLTDFKDYLSVAYISGINNTGGGIIGSLIVYFLVKMVGIIGSYILLISFTAIFIVLITDISLVSLIKSSYDKLKDRKKVSAKNKLQDKMAEKKAEEVESTEELVEVEKKERIDVPIEIVEQVEEERKVYEKAFLEKEEGEYTPPPITLLKEAIPSPKIKNEVLLEKAKKIEETLRNFGIEAKVVQVTKGPAITRFELQPSAGVKVSRIVSLTDDLALSLAAPSVRIEAPIPGKSAIGIEVPNEKITPVYLREVIDSKKFRSFKSELAIGLGKDIAGNIVIADLAKMPHLLIAGATGSGKSVCINSLIVSLLYKASPKQVKMILIDPKVVELNIYNGIPHLLTPVVTDPKKAAGVLNWAVQEMIRRYSLFADHGVRDIESYNEKYKEERLYKIVIIIDELSDLMMVSPAEVEEYIFRLAQMARAAGIHLVIATQRPSVDVITGVIKANIPSRISFAVSSQIDSRTILDMTGAEKLLGKGDMLFDPIGASKPIRVQGAFISEEEVEAVVNFLKENYSSHYEEIKVEEKTNGKNLDEEEDELLEDAVSVILETGQASISLLQRKLRIGYARAARIIDQLEQKGIISGYDGAKPRQIILPREEIQKILERKSV</sequence>
<dbReference type="EMBL" id="AE008691">
    <property type="protein sequence ID" value="AAM24600.1"/>
    <property type="molecule type" value="Genomic_DNA"/>
</dbReference>
<dbReference type="RefSeq" id="WP_011025666.1">
    <property type="nucleotide sequence ID" value="NC_003869.1"/>
</dbReference>
<dbReference type="SMR" id="Q8R5S4"/>
<dbReference type="STRING" id="273068.TTE1378"/>
<dbReference type="KEGG" id="tte:TTE1378"/>
<dbReference type="eggNOG" id="COG1674">
    <property type="taxonomic scope" value="Bacteria"/>
</dbReference>
<dbReference type="HOGENOM" id="CLU_001981_9_2_9"/>
<dbReference type="OrthoDB" id="9807790at2"/>
<dbReference type="Proteomes" id="UP000000555">
    <property type="component" value="Chromosome"/>
</dbReference>
<dbReference type="GO" id="GO:0005886">
    <property type="term" value="C:plasma membrane"/>
    <property type="evidence" value="ECO:0007669"/>
    <property type="project" value="UniProtKB-SubCell"/>
</dbReference>
<dbReference type="GO" id="GO:0005524">
    <property type="term" value="F:ATP binding"/>
    <property type="evidence" value="ECO:0007669"/>
    <property type="project" value="UniProtKB-KW"/>
</dbReference>
<dbReference type="GO" id="GO:0016887">
    <property type="term" value="F:ATP hydrolysis activity"/>
    <property type="evidence" value="ECO:0007669"/>
    <property type="project" value="InterPro"/>
</dbReference>
<dbReference type="GO" id="GO:0003677">
    <property type="term" value="F:DNA binding"/>
    <property type="evidence" value="ECO:0007669"/>
    <property type="project" value="UniProtKB-KW"/>
</dbReference>
<dbReference type="GO" id="GO:0051301">
    <property type="term" value="P:cell division"/>
    <property type="evidence" value="ECO:0007669"/>
    <property type="project" value="UniProtKB-KW"/>
</dbReference>
<dbReference type="GO" id="GO:0007059">
    <property type="term" value="P:chromosome segregation"/>
    <property type="evidence" value="ECO:0007669"/>
    <property type="project" value="UniProtKB-KW"/>
</dbReference>
<dbReference type="CDD" id="cd01127">
    <property type="entry name" value="TrwB_TraG_TraD_VirD4"/>
    <property type="match status" value="1"/>
</dbReference>
<dbReference type="Gene3D" id="3.30.980.40">
    <property type="match status" value="1"/>
</dbReference>
<dbReference type="Gene3D" id="3.40.50.300">
    <property type="entry name" value="P-loop containing nucleotide triphosphate hydrolases"/>
    <property type="match status" value="1"/>
</dbReference>
<dbReference type="Gene3D" id="1.10.10.10">
    <property type="entry name" value="Winged helix-like DNA-binding domain superfamily/Winged helix DNA-binding domain"/>
    <property type="match status" value="1"/>
</dbReference>
<dbReference type="InterPro" id="IPR003593">
    <property type="entry name" value="AAA+_ATPase"/>
</dbReference>
<dbReference type="InterPro" id="IPR050206">
    <property type="entry name" value="FtsK/SpoIIIE/SftA"/>
</dbReference>
<dbReference type="InterPro" id="IPR025199">
    <property type="entry name" value="FtsK_4TM"/>
</dbReference>
<dbReference type="InterPro" id="IPR041027">
    <property type="entry name" value="FtsK_alpha"/>
</dbReference>
<dbReference type="InterPro" id="IPR002543">
    <property type="entry name" value="FtsK_dom"/>
</dbReference>
<dbReference type="InterPro" id="IPR018541">
    <property type="entry name" value="Ftsk_gamma"/>
</dbReference>
<dbReference type="InterPro" id="IPR036259">
    <property type="entry name" value="MFS_trans_sf"/>
</dbReference>
<dbReference type="InterPro" id="IPR027417">
    <property type="entry name" value="P-loop_NTPase"/>
</dbReference>
<dbReference type="InterPro" id="IPR036388">
    <property type="entry name" value="WH-like_DNA-bd_sf"/>
</dbReference>
<dbReference type="InterPro" id="IPR036390">
    <property type="entry name" value="WH_DNA-bd_sf"/>
</dbReference>
<dbReference type="PANTHER" id="PTHR22683:SF41">
    <property type="entry name" value="DNA TRANSLOCASE FTSK"/>
    <property type="match status" value="1"/>
</dbReference>
<dbReference type="PANTHER" id="PTHR22683">
    <property type="entry name" value="SPORULATION PROTEIN RELATED"/>
    <property type="match status" value="1"/>
</dbReference>
<dbReference type="Pfam" id="PF13491">
    <property type="entry name" value="FtsK_4TM"/>
    <property type="match status" value="1"/>
</dbReference>
<dbReference type="Pfam" id="PF17854">
    <property type="entry name" value="FtsK_alpha"/>
    <property type="match status" value="1"/>
</dbReference>
<dbReference type="Pfam" id="PF09397">
    <property type="entry name" value="FtsK_gamma"/>
    <property type="match status" value="1"/>
</dbReference>
<dbReference type="Pfam" id="PF01580">
    <property type="entry name" value="FtsK_SpoIIIE"/>
    <property type="match status" value="1"/>
</dbReference>
<dbReference type="SMART" id="SM00382">
    <property type="entry name" value="AAA"/>
    <property type="match status" value="1"/>
</dbReference>
<dbReference type="SMART" id="SM00843">
    <property type="entry name" value="Ftsk_gamma"/>
    <property type="match status" value="1"/>
</dbReference>
<dbReference type="SUPFAM" id="SSF103473">
    <property type="entry name" value="MFS general substrate transporter"/>
    <property type="match status" value="1"/>
</dbReference>
<dbReference type="SUPFAM" id="SSF52540">
    <property type="entry name" value="P-loop containing nucleoside triphosphate hydrolases"/>
    <property type="match status" value="1"/>
</dbReference>
<dbReference type="SUPFAM" id="SSF46785">
    <property type="entry name" value="Winged helix' DNA-binding domain"/>
    <property type="match status" value="1"/>
</dbReference>
<dbReference type="PROSITE" id="PS50901">
    <property type="entry name" value="FTSK"/>
    <property type="match status" value="1"/>
</dbReference>
<keyword id="KW-0067">ATP-binding</keyword>
<keyword id="KW-0131">Cell cycle</keyword>
<keyword id="KW-0132">Cell division</keyword>
<keyword id="KW-1003">Cell membrane</keyword>
<keyword id="KW-0159">Chromosome partition</keyword>
<keyword id="KW-0238">DNA-binding</keyword>
<keyword id="KW-0472">Membrane</keyword>
<keyword id="KW-0547">Nucleotide-binding</keyword>
<keyword id="KW-1185">Reference proteome</keyword>
<keyword id="KW-0812">Transmembrane</keyword>
<keyword id="KW-1133">Transmembrane helix</keyword>
<organism>
    <name type="scientific">Caldanaerobacter subterraneus subsp. tengcongensis (strain DSM 15242 / JCM 11007 / NBRC 100824 / MB4)</name>
    <name type="common">Thermoanaerobacter tengcongensis</name>
    <dbReference type="NCBI Taxonomy" id="273068"/>
    <lineage>
        <taxon>Bacteria</taxon>
        <taxon>Bacillati</taxon>
        <taxon>Bacillota</taxon>
        <taxon>Clostridia</taxon>
        <taxon>Thermoanaerobacterales</taxon>
        <taxon>Thermoanaerobacteraceae</taxon>
        <taxon>Caldanaerobacter</taxon>
    </lineage>
</organism>
<reference key="1">
    <citation type="journal article" date="2002" name="Genome Res.">
        <title>A complete sequence of the T. tengcongensis genome.</title>
        <authorList>
            <person name="Bao Q."/>
            <person name="Tian Y."/>
            <person name="Li W."/>
            <person name="Xu Z."/>
            <person name="Xuan Z."/>
            <person name="Hu S."/>
            <person name="Dong W."/>
            <person name="Yang J."/>
            <person name="Chen Y."/>
            <person name="Xue Y."/>
            <person name="Xu Y."/>
            <person name="Lai X."/>
            <person name="Huang L."/>
            <person name="Dong X."/>
            <person name="Ma Y."/>
            <person name="Ling L."/>
            <person name="Tan H."/>
            <person name="Chen R."/>
            <person name="Wang J."/>
            <person name="Yu J."/>
            <person name="Yang H."/>
        </authorList>
    </citation>
    <scope>NUCLEOTIDE SEQUENCE [LARGE SCALE GENOMIC DNA]</scope>
    <source>
        <strain>DSM 15242 / JCM 11007 / NBRC 100824 / MB4</strain>
    </source>
</reference>
<protein>
    <recommendedName>
        <fullName>DNA translocase FtsK</fullName>
    </recommendedName>
</protein>